<sequence>MSRYQPRIILNHPEKVVPDDIMEQFFLTIKTGDIDKIRNFVAQNKNKFNIIEKSSKPGGPNKTPIHAVLELDDRIADQETKLTIIKYLDKMGAPMDLPDSDNVWPIHLAAADQDEDIIDYMLKNKVSIDRKDSSNNTPLHYAVYGKQVPCFDKVKVGSIVPPQDIDKLPLNKTLTDTKDYIVELLNNNPQIKNNLIHTVNTIMNIPSMYQATKTEKDLETDIVDIFTEIASNPSYPSQNYANSMSVQQNKLDQLINRMYILINDDLLRGLTNPLKISPNNTGWGPVTPSSSGQPSSIDRILEREHDYVFNELNNKYSSARNTVIDINLASTNKLSRETIPNIMRNINTNYIDRLIFCPDCSNSEYGEKITLTKMLYLLVWSNYKLNYIPDLVRRIMDNMKIMSTPIHSQIVNSNYTAFPLNSNLLVDDDSSLIGYIFSNLLRNKLNPQSQIDLALANVMDQVDPTINAITGGINSCITNQLVPLFTNSDDPNGAVNLFDGVLNSPINNLWSIPEFRSLREDINDLRPAYRDGKISWFQMLFNLIQEIQPNLVTGNTNDVTNNIFIRGRRTPRYILPLTPLPNSTNYGPPPGPPHGTLNNAYTYSEAFRVMDALVQYITSGQINATRYPRVFDQNINDWIPFIDNEFQSDALLQQYPELTFLYKILAVHTQRAIYSVIFNCISILLRNLPVSPEADIVRNYLELIDDAYMYYLLLPSEPNPAEFTQTGTDDTLADLKQHKWDPDNDLVNWFTKYIQRIPTEFIEQLYQLIIQNIDDFNYGNLENIRNHIESSMGDLSNFITPIINNSEFRNSIKKYFGTFNYPASYNGTRIASMQVIPRFNSLIDDIDFEYRFDDYLTLLRNGAITGLTFLTEVYGYFFVDTKKRLQLIDESLVDINAIVADIIANINNETYYYIPQVILPALVKQLITVITNIYAIKDVLSKFTPVKVEFDSLITNSIPEHNQIINLGNDFVSYVQDQLKIIYTNTIDIIKYHNNVIEFLNTHSASQLINATNTATGNNITTTRVFNRNLIPIQIFPSTLSDNPNFTEIETVLRSYSIPEITYYADATDNTDILIDIFDIGSTLNLYHGTISFDRTGIISNSPNVTDNLQINIENDGTVKDIPDPIAGQWLSFDVNHPRGTSYFNAFIAYITRNFQFDKLNGMPSSVFKFLPEYLSFMKQQIIEQVVQFIVDNKDTNAKKIYDELTNLGTQTSYQAIPDVKNYIIIGKLTDDILNKLFEFAIRQSVSSWIYNITSNDPRYRSIIDPLNQTISIINKKDYLRLSLNQINRETISDLLSTNSPYVDYGLAQVETNPNNLSYTNYQNLNKFIYYLYNINYSSDNFQDGNCYYINPTIVSKLIDSYTLEAKNSDGNTPLHLAISMTNPDIVEILLKHGANPFTFRNIRNESPYDLFNDIIRSHLKYDTGNTVSKSIENFYKPFNDLLVSRLLDDKFKNNIIKNITYGIPIELIMYNHMFHLYLENYRYDFTIEMRDSIRRIFQKYFNITDTVYPTDLFEINRDEDLSKILESEFPQNRVKTSVQLLNPKLRDYQKQLAELNNQIINLTKEKRSTINSQQISFINNLIANLEARKSIVQTNISDLEFKQPTSTVDSAMISSFKSSVNSIQNRIGDRSLNLIDFYRLAFGRIGYSQDLYLNIWRLYLEKDILNARSMIFPLLDQVINNHVSLVKENKMTRENKMTRENKQELAVIVDFYSTVKKYIESKKSLPNNLDDNPILQEEHDHIVYLINLILTPTIRNILISQIYQGLAESDLTNTLIADRNVAIRDILNSEYNGHSLDSFIKDILPNLSVKYFTTIYGNQDPNKFITSASDVFQPIIETVKLNRIIQVSDDSILIQNLRDYVIPFFINTYQNFIHHIELSIYAYEKYILNTYQLTKILQIMSNLQIPK</sequence>
<proteinExistence type="evidence at protein level"/>
<protein>
    <recommendedName>
        <fullName>Putative ankyrin repeat protein L484</fullName>
    </recommendedName>
</protein>
<organism>
    <name type="scientific">Acanthamoeba polyphaga mimivirus</name>
    <name type="common">APMV</name>
    <dbReference type="NCBI Taxonomy" id="212035"/>
    <lineage>
        <taxon>Viruses</taxon>
        <taxon>Varidnaviria</taxon>
        <taxon>Bamfordvirae</taxon>
        <taxon>Nucleocytoviricota</taxon>
        <taxon>Megaviricetes</taxon>
        <taxon>Imitervirales</taxon>
        <taxon>Mimiviridae</taxon>
        <taxon>Megamimivirinae</taxon>
        <taxon>Mimivirus</taxon>
        <taxon>Mimivirus bradfordmassiliense</taxon>
    </lineage>
</organism>
<dbReference type="EMBL" id="AY653733">
    <property type="protein sequence ID" value="AAV50750.1"/>
    <property type="molecule type" value="Genomic_DNA"/>
</dbReference>
<dbReference type="SMR" id="Q5UQF0"/>
<dbReference type="KEGG" id="vg:9925111"/>
<dbReference type="Proteomes" id="UP000001134">
    <property type="component" value="Genome"/>
</dbReference>
<dbReference type="GO" id="GO:0044423">
    <property type="term" value="C:virion component"/>
    <property type="evidence" value="ECO:0007669"/>
    <property type="project" value="UniProtKB-KW"/>
</dbReference>
<dbReference type="Gene3D" id="1.25.40.20">
    <property type="entry name" value="Ankyrin repeat-containing domain"/>
    <property type="match status" value="2"/>
</dbReference>
<dbReference type="InterPro" id="IPR002110">
    <property type="entry name" value="Ankyrin_rpt"/>
</dbReference>
<dbReference type="InterPro" id="IPR036770">
    <property type="entry name" value="Ankyrin_rpt-contain_sf"/>
</dbReference>
<dbReference type="PANTHER" id="PTHR24171">
    <property type="entry name" value="ANKYRIN REPEAT DOMAIN-CONTAINING PROTEIN 39-RELATED"/>
    <property type="match status" value="1"/>
</dbReference>
<dbReference type="Pfam" id="PF00023">
    <property type="entry name" value="Ank"/>
    <property type="match status" value="1"/>
</dbReference>
<dbReference type="Pfam" id="PF13637">
    <property type="entry name" value="Ank_4"/>
    <property type="match status" value="1"/>
</dbReference>
<dbReference type="SMART" id="SM00248">
    <property type="entry name" value="ANK"/>
    <property type="match status" value="3"/>
</dbReference>
<dbReference type="SUPFAM" id="SSF48403">
    <property type="entry name" value="Ankyrin repeat"/>
    <property type="match status" value="2"/>
</dbReference>
<dbReference type="PROSITE" id="PS50297">
    <property type="entry name" value="ANK_REP_REGION"/>
    <property type="match status" value="2"/>
</dbReference>
<dbReference type="PROSITE" id="PS50088">
    <property type="entry name" value="ANK_REPEAT"/>
    <property type="match status" value="2"/>
</dbReference>
<comment type="subcellular location">
    <subcellularLocation>
        <location evidence="2">Virion</location>
    </subcellularLocation>
</comment>
<organismHost>
    <name type="scientific">Acanthamoeba polyphaga</name>
    <name type="common">Amoeba</name>
    <dbReference type="NCBI Taxonomy" id="5757"/>
</organismHost>
<keyword id="KW-0040">ANK repeat</keyword>
<keyword id="KW-0175">Coiled coil</keyword>
<keyword id="KW-1185">Reference proteome</keyword>
<keyword id="KW-0677">Repeat</keyword>
<keyword id="KW-0946">Virion</keyword>
<reference key="1">
    <citation type="journal article" date="2004" name="Science">
        <title>The 1.2-megabase genome sequence of Mimivirus.</title>
        <authorList>
            <person name="Raoult D."/>
            <person name="Audic S."/>
            <person name="Robert C."/>
            <person name="Abergel C."/>
            <person name="Renesto P."/>
            <person name="Ogata H."/>
            <person name="La Scola B."/>
            <person name="Susan M."/>
            <person name="Claverie J.-M."/>
        </authorList>
    </citation>
    <scope>NUCLEOTIDE SEQUENCE [LARGE SCALE GENOMIC DNA]</scope>
    <source>
        <strain>Rowbotham-Bradford</strain>
    </source>
</reference>
<reference key="2">
    <citation type="journal article" date="2006" name="J. Virol.">
        <title>Mimivirus giant particles incorporate a large fraction of anonymous and unique gene products.</title>
        <authorList>
            <person name="Renesto P."/>
            <person name="Abergel C."/>
            <person name="Decloquement P."/>
            <person name="Moinier D."/>
            <person name="Azza S."/>
            <person name="Ogata H."/>
            <person name="Fourquet P."/>
            <person name="Gorvel J.-P."/>
            <person name="Claverie J.-M."/>
            <person name="Raoult D."/>
        </authorList>
    </citation>
    <scope>IDENTIFICATION BY MASS SPECTROMETRY [LARGE SCALE ANALYSIS]</scope>
    <scope>SUBCELLULAR LOCATION</scope>
</reference>
<accession>Q5UQF0</accession>
<feature type="chain" id="PRO_0000067172" description="Putative ankyrin repeat protein L484">
    <location>
        <begin position="1"/>
        <end position="1908"/>
    </location>
</feature>
<feature type="repeat" description="ANK 1">
    <location>
        <begin position="20"/>
        <end position="50"/>
    </location>
</feature>
<feature type="repeat" description="ANK 2">
    <location>
        <begin position="60"/>
        <end position="97"/>
    </location>
</feature>
<feature type="repeat" description="ANK 3">
    <location>
        <begin position="101"/>
        <end position="130"/>
    </location>
</feature>
<feature type="repeat" description="ANK 4">
    <location>
        <begin position="134"/>
        <end position="167"/>
    </location>
</feature>
<feature type="repeat" description="ANK 5">
    <location>
        <begin position="1370"/>
        <end position="1399"/>
    </location>
</feature>
<feature type="coiled-coil region" evidence="1">
    <location>
        <begin position="1539"/>
        <end position="1603"/>
    </location>
</feature>
<gene>
    <name type="ordered locus">MIMI_L484</name>
</gene>
<evidence type="ECO:0000255" key="1"/>
<evidence type="ECO:0000269" key="2">
    <source>
    </source>
</evidence>
<name>YL484_MIMIV</name>